<sequence length="137" mass="15041">MILGIGTDLANIDRMEKTLARFGERFRNRVFTPLEQAKAERRADVAGTYAKRWAAKEACSKALGTGLRMGISWKDMSVANLETGQPVMRLTGWAAERLASMTPPGHEAVVHVSLTDDHPWAQAFVVIEARPRAAPPA</sequence>
<proteinExistence type="inferred from homology"/>
<evidence type="ECO:0000255" key="1">
    <source>
        <dbReference type="HAMAP-Rule" id="MF_00101"/>
    </source>
</evidence>
<name>ACPS_CERS1</name>
<keyword id="KW-0963">Cytoplasm</keyword>
<keyword id="KW-0275">Fatty acid biosynthesis</keyword>
<keyword id="KW-0276">Fatty acid metabolism</keyword>
<keyword id="KW-0444">Lipid biosynthesis</keyword>
<keyword id="KW-0443">Lipid metabolism</keyword>
<keyword id="KW-0460">Magnesium</keyword>
<keyword id="KW-0479">Metal-binding</keyword>
<keyword id="KW-0808">Transferase</keyword>
<dbReference type="EC" id="2.7.8.7" evidence="1"/>
<dbReference type="EMBL" id="CP000577">
    <property type="protein sequence ID" value="ABN75422.1"/>
    <property type="molecule type" value="Genomic_DNA"/>
</dbReference>
<dbReference type="RefSeq" id="WP_002722416.1">
    <property type="nucleotide sequence ID" value="NC_009049.1"/>
</dbReference>
<dbReference type="SMR" id="A3PGF6"/>
<dbReference type="GeneID" id="67448433"/>
<dbReference type="KEGG" id="rsh:Rsph17029_0306"/>
<dbReference type="HOGENOM" id="CLU_089696_0_2_5"/>
<dbReference type="GO" id="GO:0005737">
    <property type="term" value="C:cytoplasm"/>
    <property type="evidence" value="ECO:0007669"/>
    <property type="project" value="UniProtKB-SubCell"/>
</dbReference>
<dbReference type="GO" id="GO:0008897">
    <property type="term" value="F:holo-[acyl-carrier-protein] synthase activity"/>
    <property type="evidence" value="ECO:0007669"/>
    <property type="project" value="UniProtKB-UniRule"/>
</dbReference>
<dbReference type="GO" id="GO:0000287">
    <property type="term" value="F:magnesium ion binding"/>
    <property type="evidence" value="ECO:0007669"/>
    <property type="project" value="UniProtKB-UniRule"/>
</dbReference>
<dbReference type="GO" id="GO:0006633">
    <property type="term" value="P:fatty acid biosynthetic process"/>
    <property type="evidence" value="ECO:0007669"/>
    <property type="project" value="UniProtKB-UniRule"/>
</dbReference>
<dbReference type="Gene3D" id="3.90.470.20">
    <property type="entry name" value="4'-phosphopantetheinyl transferase domain"/>
    <property type="match status" value="1"/>
</dbReference>
<dbReference type="HAMAP" id="MF_00101">
    <property type="entry name" value="AcpS"/>
    <property type="match status" value="1"/>
</dbReference>
<dbReference type="InterPro" id="IPR008278">
    <property type="entry name" value="4-PPantetheinyl_Trfase_dom"/>
</dbReference>
<dbReference type="InterPro" id="IPR037143">
    <property type="entry name" value="4-PPantetheinyl_Trfase_dom_sf"/>
</dbReference>
<dbReference type="InterPro" id="IPR002582">
    <property type="entry name" value="ACPS"/>
</dbReference>
<dbReference type="InterPro" id="IPR004568">
    <property type="entry name" value="Ppantetheine-prot_Trfase_dom"/>
</dbReference>
<dbReference type="NCBIfam" id="TIGR00516">
    <property type="entry name" value="acpS"/>
    <property type="match status" value="1"/>
</dbReference>
<dbReference type="NCBIfam" id="TIGR00556">
    <property type="entry name" value="pantethn_trn"/>
    <property type="match status" value="1"/>
</dbReference>
<dbReference type="Pfam" id="PF01648">
    <property type="entry name" value="ACPS"/>
    <property type="match status" value="1"/>
</dbReference>
<dbReference type="SUPFAM" id="SSF56214">
    <property type="entry name" value="4'-phosphopantetheinyl transferase"/>
    <property type="match status" value="1"/>
</dbReference>
<protein>
    <recommendedName>
        <fullName evidence="1">Holo-[acyl-carrier-protein] synthase</fullName>
        <shortName evidence="1">Holo-ACP synthase</shortName>
        <ecNumber evidence="1">2.7.8.7</ecNumber>
    </recommendedName>
    <alternativeName>
        <fullName evidence="1">4'-phosphopantetheinyl transferase AcpS</fullName>
    </alternativeName>
</protein>
<gene>
    <name evidence="1" type="primary">acpS</name>
    <name type="ordered locus">Rsph17029_0306</name>
</gene>
<comment type="function">
    <text evidence="1">Transfers the 4'-phosphopantetheine moiety from coenzyme A to a Ser of acyl-carrier-protein.</text>
</comment>
<comment type="catalytic activity">
    <reaction evidence="1">
        <text>apo-[ACP] + CoA = holo-[ACP] + adenosine 3',5'-bisphosphate + H(+)</text>
        <dbReference type="Rhea" id="RHEA:12068"/>
        <dbReference type="Rhea" id="RHEA-COMP:9685"/>
        <dbReference type="Rhea" id="RHEA-COMP:9690"/>
        <dbReference type="ChEBI" id="CHEBI:15378"/>
        <dbReference type="ChEBI" id="CHEBI:29999"/>
        <dbReference type="ChEBI" id="CHEBI:57287"/>
        <dbReference type="ChEBI" id="CHEBI:58343"/>
        <dbReference type="ChEBI" id="CHEBI:64479"/>
        <dbReference type="EC" id="2.7.8.7"/>
    </reaction>
</comment>
<comment type="cofactor">
    <cofactor evidence="1">
        <name>Mg(2+)</name>
        <dbReference type="ChEBI" id="CHEBI:18420"/>
    </cofactor>
</comment>
<comment type="subcellular location">
    <subcellularLocation>
        <location evidence="1">Cytoplasm</location>
    </subcellularLocation>
</comment>
<comment type="similarity">
    <text evidence="1">Belongs to the P-Pant transferase superfamily. AcpS family.</text>
</comment>
<feature type="chain" id="PRO_1000008481" description="Holo-[acyl-carrier-protein] synthase">
    <location>
        <begin position="1"/>
        <end position="137"/>
    </location>
</feature>
<feature type="binding site" evidence="1">
    <location>
        <position position="8"/>
    </location>
    <ligand>
        <name>Mg(2+)</name>
        <dbReference type="ChEBI" id="CHEBI:18420"/>
    </ligand>
</feature>
<feature type="binding site" evidence="1">
    <location>
        <position position="57"/>
    </location>
    <ligand>
        <name>Mg(2+)</name>
        <dbReference type="ChEBI" id="CHEBI:18420"/>
    </ligand>
</feature>
<organism>
    <name type="scientific">Cereibacter sphaeroides (strain ATCC 17029 / ATH 2.4.9)</name>
    <name type="common">Rhodobacter sphaeroides</name>
    <dbReference type="NCBI Taxonomy" id="349101"/>
    <lineage>
        <taxon>Bacteria</taxon>
        <taxon>Pseudomonadati</taxon>
        <taxon>Pseudomonadota</taxon>
        <taxon>Alphaproteobacteria</taxon>
        <taxon>Rhodobacterales</taxon>
        <taxon>Paracoccaceae</taxon>
        <taxon>Cereibacter</taxon>
    </lineage>
</organism>
<reference key="1">
    <citation type="submission" date="2007-02" db="EMBL/GenBank/DDBJ databases">
        <title>Complete sequence of chromosome 1 of Rhodobacter sphaeroides ATCC 17029.</title>
        <authorList>
            <person name="Copeland A."/>
            <person name="Lucas S."/>
            <person name="Lapidus A."/>
            <person name="Barry K."/>
            <person name="Detter J.C."/>
            <person name="Glavina del Rio T."/>
            <person name="Hammon N."/>
            <person name="Israni S."/>
            <person name="Dalin E."/>
            <person name="Tice H."/>
            <person name="Pitluck S."/>
            <person name="Kiss H."/>
            <person name="Brettin T."/>
            <person name="Bruce D."/>
            <person name="Han C."/>
            <person name="Tapia R."/>
            <person name="Gilna P."/>
            <person name="Schmutz J."/>
            <person name="Larimer F."/>
            <person name="Land M."/>
            <person name="Hauser L."/>
            <person name="Kyrpides N."/>
            <person name="Mikhailova N."/>
            <person name="Richardson P."/>
            <person name="Mackenzie C."/>
            <person name="Choudhary M."/>
            <person name="Donohue T.J."/>
            <person name="Kaplan S."/>
        </authorList>
    </citation>
    <scope>NUCLEOTIDE SEQUENCE [LARGE SCALE GENOMIC DNA]</scope>
    <source>
        <strain>ATCC 17029 / ATH 2.4.9</strain>
    </source>
</reference>
<accession>A3PGF6</accession>